<feature type="chain" id="PRO_1000066731" description="Uracil phosphoribosyltransferase">
    <location>
        <begin position="1"/>
        <end position="211"/>
    </location>
</feature>
<feature type="binding site" evidence="1">
    <location>
        <position position="79"/>
    </location>
    <ligand>
        <name>5-phospho-alpha-D-ribose 1-diphosphate</name>
        <dbReference type="ChEBI" id="CHEBI:58017"/>
    </ligand>
</feature>
<feature type="binding site" evidence="1">
    <location>
        <position position="104"/>
    </location>
    <ligand>
        <name>5-phospho-alpha-D-ribose 1-diphosphate</name>
        <dbReference type="ChEBI" id="CHEBI:58017"/>
    </ligand>
</feature>
<feature type="binding site" evidence="1">
    <location>
        <begin position="131"/>
        <end position="139"/>
    </location>
    <ligand>
        <name>5-phospho-alpha-D-ribose 1-diphosphate</name>
        <dbReference type="ChEBI" id="CHEBI:58017"/>
    </ligand>
</feature>
<feature type="binding site" evidence="1">
    <location>
        <position position="196"/>
    </location>
    <ligand>
        <name>uracil</name>
        <dbReference type="ChEBI" id="CHEBI:17568"/>
    </ligand>
</feature>
<feature type="binding site" evidence="1">
    <location>
        <begin position="201"/>
        <end position="203"/>
    </location>
    <ligand>
        <name>uracil</name>
        <dbReference type="ChEBI" id="CHEBI:17568"/>
    </ligand>
</feature>
<feature type="binding site" evidence="1">
    <location>
        <position position="202"/>
    </location>
    <ligand>
        <name>5-phospho-alpha-D-ribose 1-diphosphate</name>
        <dbReference type="ChEBI" id="CHEBI:58017"/>
    </ligand>
</feature>
<organism>
    <name type="scientific">Limosilactobacillus reuteri (strain DSM 20016)</name>
    <name type="common">Lactobacillus reuteri</name>
    <dbReference type="NCBI Taxonomy" id="557436"/>
    <lineage>
        <taxon>Bacteria</taxon>
        <taxon>Bacillati</taxon>
        <taxon>Bacillota</taxon>
        <taxon>Bacilli</taxon>
        <taxon>Lactobacillales</taxon>
        <taxon>Lactobacillaceae</taxon>
        <taxon>Limosilactobacillus</taxon>
    </lineage>
</organism>
<gene>
    <name evidence="1" type="primary">upp</name>
    <name type="ordered locus">Lreu_0456</name>
</gene>
<sequence>MGKFEVLDHPLIQHKLTMIRDKNVGTKFFRETVKEISTLMAYEVARDMPLKDVEIETPIAKTTQKELAGKKVAIIPILRAGIGMVDGMTDLIPAAKIGFIGMYRDEETLKPHEYFVKLPNDITERQLFIVDPMLATGGSAMMAIEALKKRGCSEKNMKFACLVAAPEGVKAVRDAYPDVDIYTAGLDDHLNEDGYIVPGLGDAGDRLFGTK</sequence>
<comment type="function">
    <text evidence="1">Catalyzes the conversion of uracil and 5-phospho-alpha-D-ribose 1-diphosphate (PRPP) to UMP and diphosphate.</text>
</comment>
<comment type="catalytic activity">
    <reaction evidence="1">
        <text>UMP + diphosphate = 5-phospho-alpha-D-ribose 1-diphosphate + uracil</text>
        <dbReference type="Rhea" id="RHEA:13017"/>
        <dbReference type="ChEBI" id="CHEBI:17568"/>
        <dbReference type="ChEBI" id="CHEBI:33019"/>
        <dbReference type="ChEBI" id="CHEBI:57865"/>
        <dbReference type="ChEBI" id="CHEBI:58017"/>
        <dbReference type="EC" id="2.4.2.9"/>
    </reaction>
</comment>
<comment type="cofactor">
    <cofactor evidence="1">
        <name>Mg(2+)</name>
        <dbReference type="ChEBI" id="CHEBI:18420"/>
    </cofactor>
    <text evidence="1">Binds 1 Mg(2+) ion per subunit. The magnesium is bound as Mg-PRPP.</text>
</comment>
<comment type="activity regulation">
    <text evidence="1">Allosterically activated by GTP.</text>
</comment>
<comment type="pathway">
    <text evidence="1">Pyrimidine metabolism; UMP biosynthesis via salvage pathway; UMP from uracil: step 1/1.</text>
</comment>
<comment type="similarity">
    <text evidence="1">Belongs to the UPRTase family.</text>
</comment>
<name>UPP_LIMRD</name>
<reference key="1">
    <citation type="journal article" date="2011" name="PLoS Genet.">
        <title>The evolution of host specialization in the vertebrate gut symbiont Lactobacillus reuteri.</title>
        <authorList>
            <person name="Frese S.A."/>
            <person name="Benson A.K."/>
            <person name="Tannock G.W."/>
            <person name="Loach D.M."/>
            <person name="Kim J."/>
            <person name="Zhang M."/>
            <person name="Oh P.L."/>
            <person name="Heng N.C."/>
            <person name="Patil P.B."/>
            <person name="Juge N."/>
            <person name="Mackenzie D.A."/>
            <person name="Pearson B.M."/>
            <person name="Lapidus A."/>
            <person name="Dalin E."/>
            <person name="Tice H."/>
            <person name="Goltsman E."/>
            <person name="Land M."/>
            <person name="Hauser L."/>
            <person name="Ivanova N."/>
            <person name="Kyrpides N.C."/>
            <person name="Walter J."/>
        </authorList>
    </citation>
    <scope>NUCLEOTIDE SEQUENCE [LARGE SCALE GENOMIC DNA]</scope>
    <source>
        <strain>DSM 20016</strain>
    </source>
</reference>
<protein>
    <recommendedName>
        <fullName evidence="1">Uracil phosphoribosyltransferase</fullName>
        <ecNumber evidence="1">2.4.2.9</ecNumber>
    </recommendedName>
    <alternativeName>
        <fullName evidence="1">UMP pyrophosphorylase</fullName>
    </alternativeName>
    <alternativeName>
        <fullName evidence="1">UPRTase</fullName>
    </alternativeName>
</protein>
<dbReference type="EC" id="2.4.2.9" evidence="1"/>
<dbReference type="EMBL" id="CP000705">
    <property type="protein sequence ID" value="ABQ82724.1"/>
    <property type="molecule type" value="Genomic_DNA"/>
</dbReference>
<dbReference type="RefSeq" id="WP_003676152.1">
    <property type="nucleotide sequence ID" value="NZ_AZDD01000022.1"/>
</dbReference>
<dbReference type="SMR" id="A5VIQ0"/>
<dbReference type="STRING" id="557436.Lreu_0456"/>
<dbReference type="GeneID" id="77192089"/>
<dbReference type="KEGG" id="lre:Lreu_0456"/>
<dbReference type="PATRIC" id="fig|557436.17.peg.852"/>
<dbReference type="eggNOG" id="COG0035">
    <property type="taxonomic scope" value="Bacteria"/>
</dbReference>
<dbReference type="HOGENOM" id="CLU_067096_2_2_9"/>
<dbReference type="UniPathway" id="UPA00574">
    <property type="reaction ID" value="UER00636"/>
</dbReference>
<dbReference type="Proteomes" id="UP000001991">
    <property type="component" value="Chromosome"/>
</dbReference>
<dbReference type="GO" id="GO:0005525">
    <property type="term" value="F:GTP binding"/>
    <property type="evidence" value="ECO:0007669"/>
    <property type="project" value="UniProtKB-KW"/>
</dbReference>
<dbReference type="GO" id="GO:0000287">
    <property type="term" value="F:magnesium ion binding"/>
    <property type="evidence" value="ECO:0007669"/>
    <property type="project" value="UniProtKB-UniRule"/>
</dbReference>
<dbReference type="GO" id="GO:0004845">
    <property type="term" value="F:uracil phosphoribosyltransferase activity"/>
    <property type="evidence" value="ECO:0007669"/>
    <property type="project" value="UniProtKB-UniRule"/>
</dbReference>
<dbReference type="GO" id="GO:0044206">
    <property type="term" value="P:UMP salvage"/>
    <property type="evidence" value="ECO:0007669"/>
    <property type="project" value="UniProtKB-UniRule"/>
</dbReference>
<dbReference type="GO" id="GO:0006223">
    <property type="term" value="P:uracil salvage"/>
    <property type="evidence" value="ECO:0007669"/>
    <property type="project" value="InterPro"/>
</dbReference>
<dbReference type="CDD" id="cd06223">
    <property type="entry name" value="PRTases_typeI"/>
    <property type="match status" value="1"/>
</dbReference>
<dbReference type="FunFam" id="3.40.50.2020:FF:000003">
    <property type="entry name" value="Uracil phosphoribosyltransferase"/>
    <property type="match status" value="1"/>
</dbReference>
<dbReference type="Gene3D" id="3.40.50.2020">
    <property type="match status" value="1"/>
</dbReference>
<dbReference type="HAMAP" id="MF_01218_B">
    <property type="entry name" value="Upp_B"/>
    <property type="match status" value="1"/>
</dbReference>
<dbReference type="InterPro" id="IPR000836">
    <property type="entry name" value="PRibTrfase_dom"/>
</dbReference>
<dbReference type="InterPro" id="IPR029057">
    <property type="entry name" value="PRTase-like"/>
</dbReference>
<dbReference type="InterPro" id="IPR034332">
    <property type="entry name" value="Upp_B"/>
</dbReference>
<dbReference type="InterPro" id="IPR050054">
    <property type="entry name" value="UPRTase/APRTase"/>
</dbReference>
<dbReference type="InterPro" id="IPR005765">
    <property type="entry name" value="Ura_phspho_trans"/>
</dbReference>
<dbReference type="NCBIfam" id="NF001097">
    <property type="entry name" value="PRK00129.1"/>
    <property type="match status" value="1"/>
</dbReference>
<dbReference type="NCBIfam" id="TIGR01091">
    <property type="entry name" value="upp"/>
    <property type="match status" value="1"/>
</dbReference>
<dbReference type="PANTHER" id="PTHR32315">
    <property type="entry name" value="ADENINE PHOSPHORIBOSYLTRANSFERASE"/>
    <property type="match status" value="1"/>
</dbReference>
<dbReference type="PANTHER" id="PTHR32315:SF4">
    <property type="entry name" value="URACIL PHOSPHORIBOSYLTRANSFERASE, CHLOROPLASTIC"/>
    <property type="match status" value="1"/>
</dbReference>
<dbReference type="Pfam" id="PF14681">
    <property type="entry name" value="UPRTase"/>
    <property type="match status" value="1"/>
</dbReference>
<dbReference type="SUPFAM" id="SSF53271">
    <property type="entry name" value="PRTase-like"/>
    <property type="match status" value="1"/>
</dbReference>
<accession>A5VIQ0</accession>
<keyword id="KW-0021">Allosteric enzyme</keyword>
<keyword id="KW-0328">Glycosyltransferase</keyword>
<keyword id="KW-0342">GTP-binding</keyword>
<keyword id="KW-0460">Magnesium</keyword>
<keyword id="KW-0547">Nucleotide-binding</keyword>
<keyword id="KW-1185">Reference proteome</keyword>
<keyword id="KW-0808">Transferase</keyword>
<proteinExistence type="inferred from homology"/>
<evidence type="ECO:0000255" key="1">
    <source>
        <dbReference type="HAMAP-Rule" id="MF_01218"/>
    </source>
</evidence>